<organism>
    <name type="scientific">Staphylococcus haemolyticus (strain JCSC1435)</name>
    <dbReference type="NCBI Taxonomy" id="279808"/>
    <lineage>
        <taxon>Bacteria</taxon>
        <taxon>Bacillati</taxon>
        <taxon>Bacillota</taxon>
        <taxon>Bacilli</taxon>
        <taxon>Bacillales</taxon>
        <taxon>Staphylococcaceae</taxon>
        <taxon>Staphylococcus</taxon>
    </lineage>
</organism>
<comment type="function">
    <text evidence="1">Endonuclease that is involved in the suppression of homologous recombination and thus may have a key role in the control of bacterial genetic diversity.</text>
</comment>
<comment type="function">
    <text evidence="1">Acts as a ribosome collision sensor, splitting the ribosome into its 2 subunits. Detects stalled/collided 70S ribosomes which it binds and splits by an ATP-hydrolysis driven conformational change. Acts upstream of the ribosome quality control system (RQC), a ribosome-associated complex that mediates the extraction of incompletely synthesized nascent chains from stalled ribosomes and their subsequent degradation. Probably generates substrates for RQC.</text>
</comment>
<comment type="subunit">
    <text evidence="1">Homodimer. Binds to stalled ribosomes, contacting rRNA.</text>
</comment>
<comment type="similarity">
    <text evidence="1">Belongs to the DNA mismatch repair MutS family. MutS2 subfamily.</text>
</comment>
<protein>
    <recommendedName>
        <fullName evidence="1">Endonuclease MutS2</fullName>
        <ecNumber evidence="1">3.1.-.-</ecNumber>
    </recommendedName>
    <alternativeName>
        <fullName evidence="1">Ribosome-associated protein quality control-upstream factor</fullName>
        <shortName evidence="1">RQC-upstream factor</shortName>
        <shortName evidence="1">RqcU</shortName>
        <ecNumber evidence="1">3.6.4.-</ecNumber>
    </alternativeName>
</protein>
<evidence type="ECO:0000255" key="1">
    <source>
        <dbReference type="HAMAP-Rule" id="MF_00092"/>
    </source>
</evidence>
<accession>Q4L5E9</accession>
<keyword id="KW-0067">ATP-binding</keyword>
<keyword id="KW-0238">DNA-binding</keyword>
<keyword id="KW-0255">Endonuclease</keyword>
<keyword id="KW-0378">Hydrolase</keyword>
<keyword id="KW-0540">Nuclease</keyword>
<keyword id="KW-0547">Nucleotide-binding</keyword>
<keyword id="KW-0694">RNA-binding</keyword>
<keyword id="KW-0699">rRNA-binding</keyword>
<dbReference type="EC" id="3.1.-.-" evidence="1"/>
<dbReference type="EC" id="3.6.4.-" evidence="1"/>
<dbReference type="EMBL" id="AP006716">
    <property type="protein sequence ID" value="BAE05126.1"/>
    <property type="molecule type" value="Genomic_DNA"/>
</dbReference>
<dbReference type="RefSeq" id="WP_011276094.1">
    <property type="nucleotide sequence ID" value="NC_007168.1"/>
</dbReference>
<dbReference type="SMR" id="Q4L5E9"/>
<dbReference type="KEGG" id="sha:SH1817"/>
<dbReference type="eggNOG" id="COG1193">
    <property type="taxonomic scope" value="Bacteria"/>
</dbReference>
<dbReference type="HOGENOM" id="CLU_011252_2_1_9"/>
<dbReference type="OrthoDB" id="9808166at2"/>
<dbReference type="Proteomes" id="UP000000543">
    <property type="component" value="Chromosome"/>
</dbReference>
<dbReference type="GO" id="GO:0005524">
    <property type="term" value="F:ATP binding"/>
    <property type="evidence" value="ECO:0007669"/>
    <property type="project" value="UniProtKB-UniRule"/>
</dbReference>
<dbReference type="GO" id="GO:0016887">
    <property type="term" value="F:ATP hydrolysis activity"/>
    <property type="evidence" value="ECO:0007669"/>
    <property type="project" value="InterPro"/>
</dbReference>
<dbReference type="GO" id="GO:0140664">
    <property type="term" value="F:ATP-dependent DNA damage sensor activity"/>
    <property type="evidence" value="ECO:0007669"/>
    <property type="project" value="InterPro"/>
</dbReference>
<dbReference type="GO" id="GO:0004519">
    <property type="term" value="F:endonuclease activity"/>
    <property type="evidence" value="ECO:0007669"/>
    <property type="project" value="UniProtKB-UniRule"/>
</dbReference>
<dbReference type="GO" id="GO:0030983">
    <property type="term" value="F:mismatched DNA binding"/>
    <property type="evidence" value="ECO:0007669"/>
    <property type="project" value="InterPro"/>
</dbReference>
<dbReference type="GO" id="GO:0043023">
    <property type="term" value="F:ribosomal large subunit binding"/>
    <property type="evidence" value="ECO:0007669"/>
    <property type="project" value="UniProtKB-UniRule"/>
</dbReference>
<dbReference type="GO" id="GO:0019843">
    <property type="term" value="F:rRNA binding"/>
    <property type="evidence" value="ECO:0007669"/>
    <property type="project" value="UniProtKB-UniRule"/>
</dbReference>
<dbReference type="GO" id="GO:0006298">
    <property type="term" value="P:mismatch repair"/>
    <property type="evidence" value="ECO:0007669"/>
    <property type="project" value="InterPro"/>
</dbReference>
<dbReference type="GO" id="GO:0045910">
    <property type="term" value="P:negative regulation of DNA recombination"/>
    <property type="evidence" value="ECO:0007669"/>
    <property type="project" value="InterPro"/>
</dbReference>
<dbReference type="GO" id="GO:0072344">
    <property type="term" value="P:rescue of stalled ribosome"/>
    <property type="evidence" value="ECO:0007669"/>
    <property type="project" value="UniProtKB-UniRule"/>
</dbReference>
<dbReference type="CDD" id="cd03280">
    <property type="entry name" value="ABC_MutS2"/>
    <property type="match status" value="1"/>
</dbReference>
<dbReference type="FunFam" id="3.40.50.300:FF:000830">
    <property type="entry name" value="Endonuclease MutS2"/>
    <property type="match status" value="1"/>
</dbReference>
<dbReference type="Gene3D" id="3.30.1370.110">
    <property type="match status" value="1"/>
</dbReference>
<dbReference type="Gene3D" id="3.40.50.300">
    <property type="entry name" value="P-loop containing nucleotide triphosphate hydrolases"/>
    <property type="match status" value="1"/>
</dbReference>
<dbReference type="HAMAP" id="MF_00092">
    <property type="entry name" value="MutS2"/>
    <property type="match status" value="1"/>
</dbReference>
<dbReference type="InterPro" id="IPR000432">
    <property type="entry name" value="DNA_mismatch_repair_MutS_C"/>
</dbReference>
<dbReference type="InterPro" id="IPR007696">
    <property type="entry name" value="DNA_mismatch_repair_MutS_core"/>
</dbReference>
<dbReference type="InterPro" id="IPR036187">
    <property type="entry name" value="DNA_mismatch_repair_MutS_sf"/>
</dbReference>
<dbReference type="InterPro" id="IPR046893">
    <property type="entry name" value="MSSS"/>
</dbReference>
<dbReference type="InterPro" id="IPR045076">
    <property type="entry name" value="MutS"/>
</dbReference>
<dbReference type="InterPro" id="IPR005747">
    <property type="entry name" value="MutS2"/>
</dbReference>
<dbReference type="InterPro" id="IPR027417">
    <property type="entry name" value="P-loop_NTPase"/>
</dbReference>
<dbReference type="InterPro" id="IPR002625">
    <property type="entry name" value="Smr_dom"/>
</dbReference>
<dbReference type="InterPro" id="IPR036063">
    <property type="entry name" value="Smr_dom_sf"/>
</dbReference>
<dbReference type="NCBIfam" id="TIGR01069">
    <property type="entry name" value="mutS2"/>
    <property type="match status" value="1"/>
</dbReference>
<dbReference type="PANTHER" id="PTHR48466:SF2">
    <property type="entry name" value="OS10G0509000 PROTEIN"/>
    <property type="match status" value="1"/>
</dbReference>
<dbReference type="PANTHER" id="PTHR48466">
    <property type="entry name" value="OS10G0509000 PROTEIN-RELATED"/>
    <property type="match status" value="1"/>
</dbReference>
<dbReference type="Pfam" id="PF20297">
    <property type="entry name" value="MSSS"/>
    <property type="match status" value="1"/>
</dbReference>
<dbReference type="Pfam" id="PF00488">
    <property type="entry name" value="MutS_V"/>
    <property type="match status" value="1"/>
</dbReference>
<dbReference type="Pfam" id="PF01713">
    <property type="entry name" value="Smr"/>
    <property type="match status" value="1"/>
</dbReference>
<dbReference type="PIRSF" id="PIRSF005814">
    <property type="entry name" value="MutS_YshD"/>
    <property type="match status" value="1"/>
</dbReference>
<dbReference type="SMART" id="SM00534">
    <property type="entry name" value="MUTSac"/>
    <property type="match status" value="1"/>
</dbReference>
<dbReference type="SMART" id="SM00533">
    <property type="entry name" value="MUTSd"/>
    <property type="match status" value="1"/>
</dbReference>
<dbReference type="SMART" id="SM00463">
    <property type="entry name" value="SMR"/>
    <property type="match status" value="1"/>
</dbReference>
<dbReference type="SUPFAM" id="SSF48334">
    <property type="entry name" value="DNA repair protein MutS, domain III"/>
    <property type="match status" value="1"/>
</dbReference>
<dbReference type="SUPFAM" id="SSF52540">
    <property type="entry name" value="P-loop containing nucleoside triphosphate hydrolases"/>
    <property type="match status" value="1"/>
</dbReference>
<dbReference type="SUPFAM" id="SSF160443">
    <property type="entry name" value="SMR domain-like"/>
    <property type="match status" value="1"/>
</dbReference>
<dbReference type="PROSITE" id="PS00486">
    <property type="entry name" value="DNA_MISMATCH_REPAIR_2"/>
    <property type="match status" value="1"/>
</dbReference>
<dbReference type="PROSITE" id="PS50828">
    <property type="entry name" value="SMR"/>
    <property type="match status" value="1"/>
</dbReference>
<name>MUTS2_STAHJ</name>
<proteinExistence type="inferred from homology"/>
<sequence length="783" mass="88577">MRQKTLDVLEFDKIKSFVASETISDLGREKVSKMSPATDFETVEFQMNETDEISQIYNKHRLPSLSGLAKISPLIHRANIGGVLNVTELNLVKRLIQVQNQFKTFYNQLLEEDEQVVKYPILNDKMNQLPILSDLFQEINEKCDTHDLYDSASYELQGIRSKISSTNQRIRQNLDRIVKSQANQKKLSDAIITVRNDRNVIPVKAEYRQDFKGIVHDQSASGQTLYIEPSSIVEMNNQISRLRNDEAVERERILTELTGMVAAEADGCLIAESVMGQIDFLTAKARYARSIKGTKPTFYKDRTVYLPNAYHPLLNKDTVVANTIEFVDDIETVIITGPNTGGKTVTLKTLGLIIIMAQSGLLIPTLDGSQLSVFENVYCDIGDEQSIEQSLSTFSSHMKNIVEILQETDKNSLVLFDELGAGTDPSEGAALAMSILDHVREIGSLVMATTHYPELKAYSYNREGVMNASVEFDVNTLSPTYKLLMGVPGRSNAFDISRKLGLSLGIINKAKTMIGTDEQEINSMIESLEKNSKRVDEQRIELDRLLKEARKTHDDLEHQYEQYKSYEKKLMDEAKEKANQRVKSATKEADSILKELRTLRDQKGADVKEHELIDKKKQLDDQYEAKSLKQNVQKQKYDEIHAGDEVKVLSYGQKGEVLELVSEEEAVVQMGIIKMKLPIEDLEKTKKKKEKPSKMVTRQNRQTIKTELHLRGYRYEEAVSELDQYIDQAVLSNYEQVYIIHGKGTGALQKAVQNHLNKHKSVKSYRGGMPSEGGFGVTVAELK</sequence>
<gene>
    <name evidence="1" type="primary">mutS2</name>
    <name evidence="1" type="synonym">rqcU</name>
    <name type="ordered locus">SH1817</name>
</gene>
<reference key="1">
    <citation type="journal article" date="2005" name="J. Bacteriol.">
        <title>Whole-genome sequencing of Staphylococcus haemolyticus uncovers the extreme plasticity of its genome and the evolution of human-colonizing staphylococcal species.</title>
        <authorList>
            <person name="Takeuchi F."/>
            <person name="Watanabe S."/>
            <person name="Baba T."/>
            <person name="Yuzawa H."/>
            <person name="Ito T."/>
            <person name="Morimoto Y."/>
            <person name="Kuroda M."/>
            <person name="Cui L."/>
            <person name="Takahashi M."/>
            <person name="Ankai A."/>
            <person name="Baba S."/>
            <person name="Fukui S."/>
            <person name="Lee J.C."/>
            <person name="Hiramatsu K."/>
        </authorList>
    </citation>
    <scope>NUCLEOTIDE SEQUENCE [LARGE SCALE GENOMIC DNA]</scope>
    <source>
        <strain>JCSC1435</strain>
    </source>
</reference>
<feature type="chain" id="PRO_0000115236" description="Endonuclease MutS2">
    <location>
        <begin position="1"/>
        <end position="783"/>
    </location>
</feature>
<feature type="domain" description="Smr" evidence="1">
    <location>
        <begin position="708"/>
        <end position="783"/>
    </location>
</feature>
<feature type="binding site" evidence="1">
    <location>
        <begin position="337"/>
        <end position="344"/>
    </location>
    <ligand>
        <name>ATP</name>
        <dbReference type="ChEBI" id="CHEBI:30616"/>
    </ligand>
</feature>